<name>CARP1_CANAX</name>
<comment type="function">
    <text evidence="7 9 11 12 14 16 17 19 22">Secreted aspartic peptidases (SAPs) are a group of ten acidic hydrolases considered as key virulence factors (PubMed:10569787, PubMed:11478679, PubMed:12761103, PubMed:1447155, PubMed:15845479, PubMed:19880183, PubMed:20713630, PubMed:22302440, PubMed:23927842). These enzymes supply the fungus with nutrient amino acids as well as are able to degrade the selected host's proteins involved in the immune defense (PubMed:10569787, PubMed:11478679, PubMed:12761103, PubMed:15845479, PubMed:19880183, PubMed:20713630, PubMed:22302440, PubMed:23927842). Induces host inflammatory cytokine production in a proteolytic activity-independent way (PubMed:20713630). Plays a role in tissue damage during superficial infection (PubMed:12761103). Moreover, acts toward human hemoglobin though limited proteolysis to generate a variety of antimicrobial hemocidins, enabling to compete with the other microorganisms of the same physiological niche using the microbicidal peptides generated from the host protein (PubMed:23927842).</text>
</comment>
<comment type="function">
    <text evidence="18 23">Plays a key role in defense against host by cleaving histatin-5 (Hst 5), a peptide from human saliva that carries out fungicidal activity (PubMed:27390786). The cleavage rate decreases in an order of SAP2 &gt; SAP9 &gt; SAP3 &gt; SAP7 &gt; SAP4 &gt; SAP1 &gt; SAP8 (PubMed:21646240). The first cleavage occurs between residues 'Lys-17' and 'His-18' of Hst 5, giving DSHAKRHHGYKRKFHEK and HHSHRGY peptides (PubMed:27390786). Further fragmentation by SAP1 results in AKRHHGYKRKFHEK and AKRHHGY products (PubMed:27390786).</text>
</comment>
<comment type="catalytic activity">
    <reaction evidence="18 23 25 26">
        <text>Preferential cleavage at the carboxyl of hydrophobic amino acids, but fails to cleave 15-Leu-|-Tyr-16, 16-Tyr-|-Leu-17 and 24-Phe-|-Phe-25 of insulin B chain. Activates trypsinogen, and degrades keratin.</text>
        <dbReference type="EC" id="3.4.23.24"/>
    </reaction>
</comment>
<comment type="activity regulation">
    <text evidence="10 20">Inhibited by pepstatin A analogs and squash aspartic peptidase inhibitor (SQAPI).</text>
</comment>
<comment type="biophysicochemical properties">
    <phDependence>
        <text evidence="18 23 25">Optimum pH is 5.0. using BSA or casein-resorufin as substrates, and 6.0-7.0, the pH of the saliva, for cleavage of Hst 5.</text>
    </phDependence>
</comment>
<comment type="subunit">
    <text evidence="1">Monomer.</text>
</comment>
<comment type="subcellular location">
    <subcellularLocation>
        <location evidence="8 24 26">Secreted</location>
    </subcellularLocation>
</comment>
<comment type="induction">
    <text evidence="7 13 15 19 21">Expressed during development of germ tubes, pseudohyphae, true hyphae and opaque cells (PubMed:10569787, PubMed:14555467, PubMed:1620110). Expressed in greater amounts in the mature biofilms compared to early biofilms during inflammatory disorder of the palatal mucosa among denture wearers (PubMed:22302440). Regulated by growth phase and alpha-pheromones (PubMed:23484407).</text>
</comment>
<comment type="similarity">
    <text evidence="31">Belongs to the peptidase A1 family.</text>
</comment>
<reference key="1">
    <citation type="journal article" date="1991" name="J. Med. Vet. Mycol.">
        <title>Sequence of the Candida albicans gene encoding the secretory aspartate proteinase.</title>
        <authorList>
            <person name="Hube B."/>
            <person name="Turver C.J."/>
            <person name="Odds F.C."/>
            <person name="Eiffert H."/>
            <person name="Boulnois G.J."/>
            <person name="Koechel H."/>
            <person name="Ruechel R."/>
        </authorList>
    </citation>
    <scope>NUCLEOTIDE SEQUENCE [GENOMIC DNA]</scope>
    <scope>PARTIAL PROTEIN SEQUENCE</scope>
    <source>
        <strain>ATCC 10231 / CBS 6431 / CIP 48.72 / DSM 1386 / NBRC 1594</strain>
    </source>
</reference>
<reference key="2">
    <citation type="journal article" date="1994" name="J. Bacteriol.">
        <title>A fourth secreted aspartyl proteinase gene (SAP4) and a CARE2 repetitive element are located upstream of the SAP1 gene in Candida albicans.</title>
        <authorList>
            <person name="Miyasaki S.H."/>
            <person name="White T.C."/>
            <person name="Agabian N."/>
        </authorList>
    </citation>
    <scope>NUCLEOTIDE SEQUENCE [GENOMIC DNA]</scope>
    <source>
        <strain>SS</strain>
    </source>
</reference>
<reference key="3">
    <citation type="journal article" date="1992" name="J. Bacteriol.">
        <title>A second gene for a secreted aspartate proteinase in Candida albicans.</title>
        <authorList>
            <person name="Wright R.J."/>
            <person name="Carne A."/>
            <person name="Hieber A.D."/>
            <person name="Lamont I.L."/>
            <person name="Emerson G.W."/>
            <person name="Sullivan P.A."/>
        </authorList>
    </citation>
    <scope>FUNCTION</scope>
</reference>
<reference key="4">
    <citation type="journal article" date="1992" name="Mol. Cell. Biol.">
        <title>Transcription of the gene for a pepsinogen, PEP1, is regulated by white-opaque switching in Candida albicans.</title>
        <authorList>
            <person name="Morrow B."/>
            <person name="Srikantha T."/>
            <person name="Soll D.R."/>
        </authorList>
    </citation>
    <scope>INDUCTION</scope>
</reference>
<reference key="5">
    <citation type="journal article" date="1993" name="Infect. Immun.">
        <title>The genes encoding the secreted aspartyl proteinases of Candida albicans constitute a family with at least three members.</title>
        <authorList>
            <person name="Magee B.B."/>
            <person name="Hube B."/>
            <person name="Wright R.J."/>
            <person name="Sullivan P.J."/>
            <person name="Magee P.T."/>
        </authorList>
    </citation>
    <scope>IDENTIFICATION</scope>
</reference>
<reference key="6">
    <citation type="journal article" date="1993" name="Infect. Immun.">
        <title>Heterogeneity of the purified extracellular aspartyl proteinase from Candida albicans: characterization with monoclonal antibodies and N-terminal amino acid sequence analysis.</title>
        <authorList>
            <person name="Morrison C.J."/>
            <person name="Hurst S.F."/>
            <person name="Bragg S.L."/>
            <person name="Kuykendall R.J."/>
            <person name="Diaz H."/>
            <person name="Pohl J."/>
            <person name="Reiss E."/>
        </authorList>
    </citation>
    <scope>SUBCELLULAR LOCATION</scope>
</reference>
<reference key="7">
    <citation type="journal article" date="1997" name="Microbiology">
        <title>Analysis of secreted aspartic proteinases from Candida albicans: purification and characterization of individual Sap1, Sap2 and Sap3 isoenzymes.</title>
        <authorList>
            <person name="Smolenski G."/>
            <person name="Sullivan P.A."/>
            <person name="Cutfield S.M."/>
            <person name="Cutfield J.F."/>
        </authorList>
    </citation>
    <scope>CATALYTIC ACTIVITY</scope>
    <scope>BIOPHYSICOCHEMICAL PROPERTIES</scope>
</reference>
<reference key="8">
    <citation type="journal article" date="1999" name="Infect. Immun.">
        <title>Misexpression of the opaque-phase-specific gene PEP1 (SAP1) in the white phase of Candida albicans confers increased virulence in a mouse model of cutaneous infection.</title>
        <authorList>
            <person name="Kvaal C."/>
            <person name="Lachke S.A."/>
            <person name="Srikantha T."/>
            <person name="Daniels K."/>
            <person name="McCoy J."/>
            <person name="Soll D.R."/>
        </authorList>
    </citation>
    <scope>INDUCTION</scope>
    <scope>FUNCTION</scope>
</reference>
<reference key="9">
    <citation type="journal article" date="1999" name="J. Infect. Dis.">
        <title>Evidence that members of the secretory aspartyl proteinase gene family, in particular SAP2, are virulence factors for Candida vaginitis.</title>
        <authorList>
            <person name="De Bernardis F."/>
            <person name="Arancia S."/>
            <person name="Morelli L."/>
            <person name="Hube B."/>
            <person name="Sanglard D."/>
            <person name="Schafer W."/>
            <person name="Cassone A."/>
        </authorList>
    </citation>
    <scope>SUBCELLULAR LOCATION</scope>
    <scope>CATALYTIC ACTIVITY</scope>
</reference>
<reference key="10">
    <citation type="journal article" date="2000" name="Microbiology">
        <title>Intra- and intermolecular events direct the propeptide-mediated maturation of the Candida albicans secreted aspartic proteinase Sap1p.</title>
        <authorList>
            <person name="Beggah S."/>
            <person name="Lechenne B."/>
            <person name="Reichard U."/>
            <person name="Foundling S."/>
            <person name="Monod M."/>
        </authorList>
    </citation>
    <scope>SUBCELLULAR LOCATION</scope>
    <scope>PROPEPTIDE</scope>
</reference>
<reference key="11">
    <citation type="journal article" date="2001" name="J. Med. Microbiol.">
        <title>Different isoforms of secreted aspartyl proteinases (Sap) are expressed by Candida albicans during oral and cutaneous candidosis in vivo.</title>
        <authorList>
            <person name="Schaller M."/>
            <person name="Januschke E."/>
            <person name="Schackert C."/>
            <person name="Woerle B."/>
            <person name="Korting H.C."/>
        </authorList>
    </citation>
    <scope>FUNCTION</scope>
</reference>
<reference key="12">
    <citation type="journal article" date="2002" name="J. Mol. Recognit.">
        <title>Analysis of the interaction between the aspartic peptidase inhibitor SQAPI and aspartic peptidases using surface plasmon resonance.</title>
        <authorList>
            <person name="Farley P.C."/>
            <person name="Christeller J.T."/>
            <person name="Sullivan M.E."/>
            <person name="Sullivan P.A."/>
            <person name="Laing W.A."/>
        </authorList>
    </citation>
    <scope>ACTIVITY REGULATION</scope>
</reference>
<reference key="13">
    <citation type="journal article" date="2003" name="Eukaryot. Cell">
        <title>Alpha-pheromone-induced 'shmooing' and gene regulation require white-opaque switching during Candida albicans mating.</title>
        <authorList>
            <person name="Lockhart S.R."/>
            <person name="Zhao R."/>
            <person name="Daniels K.J."/>
            <person name="Soll D.R."/>
        </authorList>
    </citation>
    <scope>INDUCTION</scope>
</reference>
<reference key="14">
    <citation type="journal article" date="2003" name="Infect. Immun.">
        <title>The secreted aspartyl proteinases Sap1 and Sap2 cause tissue damage in an in vitro model of vaginal candidiasis based on reconstituted human vaginal epithelium.</title>
        <authorList>
            <person name="Schaller M."/>
            <person name="Bein M."/>
            <person name="Korting H.C."/>
            <person name="Baur S."/>
            <person name="Hamm G."/>
            <person name="Monod M."/>
            <person name="Beinhauer S."/>
            <person name="Hube B."/>
        </authorList>
    </citation>
    <scope>FUNCTION</scope>
</reference>
<reference key="15">
    <citation type="journal article" date="2005" name="Infect. Immun.">
        <title>Candida albicans-secreted aspartic proteinases modify the epithelial cytokine response in an in vitro model of vaginal candidiasis.</title>
        <authorList>
            <person name="Schaller M."/>
            <person name="Korting H.C."/>
            <person name="Borelli C."/>
            <person name="Hamm G."/>
            <person name="Hube B."/>
        </authorList>
    </citation>
    <scope>FUNCTION</scope>
</reference>
<reference key="16">
    <citation type="journal article" date="2009" name="Mol. Immunol.">
        <title>The yeast Candida albicans evades human complement attack by secretion of aspartic proteases.</title>
        <authorList>
            <person name="Gropp K."/>
            <person name="Schild L."/>
            <person name="Schindler S."/>
            <person name="Hube B."/>
            <person name="Zipfel P.F."/>
            <person name="Skerka C."/>
        </authorList>
    </citation>
    <scope>FUNCTION</scope>
</reference>
<reference key="17">
    <citation type="journal article" date="2010" name="Infect. Immun.">
        <title>The inflammatory response induced by aspartic proteases of Candida albicans is independent of proteolytic activity.</title>
        <authorList>
            <person name="Pietrella D."/>
            <person name="Rachini A."/>
            <person name="Pandey N."/>
            <person name="Schild L."/>
            <person name="Netea M."/>
            <person name="Bistoni F."/>
            <person name="Hube B."/>
            <person name="Vecchiarelli A."/>
        </authorList>
    </citation>
    <scope>FUNCTION</scope>
</reference>
<reference key="18">
    <citation type="journal article" date="2011" name="J. Biochem.">
        <title>Comprehensive characterization of secreted aspartic proteases encoded by a virulence gene family in Candida albicans.</title>
        <authorList>
            <person name="Aoki W."/>
            <person name="Kitahara N."/>
            <person name="Miura N."/>
            <person name="Morisaka H."/>
            <person name="Yamamoto Y."/>
            <person name="Kuroda K."/>
            <person name="Ueda M."/>
        </authorList>
    </citation>
    <scope>CATALYTIC ACTIVITY</scope>
    <scope>BIOPHYSICOCHEMICAL PROPERTIES</scope>
</reference>
<reference key="19">
    <citation type="journal article" date="2012" name="Mycopathologia">
        <title>In vitro Candida albicans biofilm induced proteinase activity and SAP8 expression correlates with in vivo denture stomatitis severity.</title>
        <authorList>
            <person name="Ramage G."/>
            <person name="Coco B."/>
            <person name="Sherry L."/>
            <person name="Bagg J."/>
            <person name="Lappin D.F."/>
        </authorList>
    </citation>
    <scope>FUNCTION</scope>
    <scope>INDUCTION</scope>
</reference>
<reference key="20">
    <citation type="journal article" date="2012" name="Pol. J. Microbiol.">
        <title>In vitro study of secreted aspartyl proteinases Sap1 to Sap3 and Sap4 to Sap6 expression in Candida albicans pleomorphic forms.</title>
        <authorList>
            <person name="Staniszewska M."/>
            <person name="Bondaryk M."/>
            <person name="Siennicka K."/>
            <person name="Kurek A."/>
            <person name="Orlowski J."/>
            <person name="Schaller M."/>
            <person name="Kurzatkowski W."/>
        </authorList>
    </citation>
    <scope>INDUCTION</scope>
</reference>
<reference key="21">
    <citation type="journal article" date="2013" name="Biochem. Pharmacol.">
        <title>Design, synthesis, inhibition studies, and molecular modeling of pepstatin analogues addressing different secreted aspartic proteinases of Candida albicans.</title>
        <authorList>
            <person name="Cadicamo C.D."/>
            <person name="Mortier J."/>
            <person name="Wolber G."/>
            <person name="Hell M."/>
            <person name="Heinrich I.E."/>
            <person name="Michel D."/>
            <person name="Semlin L."/>
            <person name="Berger U."/>
            <person name="Korting H.C."/>
            <person name="Holtje H.D."/>
            <person name="Koksch B."/>
            <person name="Borelli C."/>
        </authorList>
    </citation>
    <scope>ACTIVITY REGULATION</scope>
</reference>
<reference key="22">
    <citation type="journal article" date="2013" name="Peptides">
        <title>Secreted aspartic peptidases of Candida albicans liberate bactericidal hemocidins from human hemoglobin.</title>
        <authorList>
            <person name="Bochenska O."/>
            <person name="Rapala-Kozik M."/>
            <person name="Wolak N."/>
            <person name="Bras G."/>
            <person name="Kozik A."/>
            <person name="Dubin A."/>
            <person name="Aoki W."/>
            <person name="Ueda M."/>
            <person name="Mak P."/>
        </authorList>
    </citation>
    <scope>FUNCTION</scope>
</reference>
<reference key="23">
    <citation type="journal article" date="2016" name="Acta Biochim. Pol.">
        <title>The action of ten secreted aspartic proteases of pathogenic yeast Candida albicans on major human salivary antimicrobial peptide, histatin 5.</title>
        <authorList>
            <person name="Bochenska O."/>
            <person name="Rapala-Kozik M."/>
            <person name="Wolak N."/>
            <person name="Aoki W."/>
            <person name="Ueda M."/>
            <person name="Kozik A."/>
        </authorList>
    </citation>
    <scope>FUNCTION</scope>
    <scope>CATALYTIC ACTIVITY</scope>
    <scope>BIOPHYSICOCHEMICAL PROPERTIES</scope>
</reference>
<accession>P0CY26</accession>
<accession>P28872</accession>
<accession>Q5A8N4</accession>
<feature type="signal peptide" evidence="4">
    <location>
        <begin position="1"/>
        <end position="18"/>
    </location>
</feature>
<feature type="propeptide" id="PRO_0000025848" description="Activation peptide" evidence="31">
    <location>
        <begin position="19"/>
        <end position="50"/>
    </location>
</feature>
<feature type="chain" id="PRO_0000025849" description="Secreted aspartic protease 1">
    <location>
        <begin position="51"/>
        <end position="391"/>
    </location>
</feature>
<feature type="domain" description="Peptidase A1" evidence="5">
    <location>
        <begin position="64"/>
        <end position="377"/>
    </location>
</feature>
<feature type="active site" evidence="6">
    <location>
        <position position="82"/>
    </location>
</feature>
<feature type="active site" evidence="6">
    <location>
        <position position="267"/>
    </location>
</feature>
<feature type="binding site" evidence="3">
    <location>
        <begin position="82"/>
        <end position="84"/>
    </location>
    <ligand>
        <name>pepstatin A</name>
        <dbReference type="ChEBI" id="CHEBI:190525"/>
        <note>inhibitor</note>
    </ligand>
</feature>
<feature type="binding site" evidence="3">
    <location>
        <position position="241"/>
    </location>
    <ligand>
        <name>Zn(2+)</name>
        <dbReference type="ChEBI" id="CHEBI:29105"/>
    </ligand>
</feature>
<feature type="binding site" evidence="3">
    <location>
        <position position="263"/>
    </location>
    <ligand>
        <name>Zn(2+)</name>
        <dbReference type="ChEBI" id="CHEBI:29105"/>
    </ligand>
</feature>
<feature type="binding site" evidence="3">
    <location>
        <begin position="267"/>
        <end position="271"/>
    </location>
    <ligand>
        <name>pepstatin A</name>
        <dbReference type="ChEBI" id="CHEBI:190525"/>
        <note>inhibitor</note>
    </ligand>
</feature>
<feature type="glycosylation site" description="N-linked (GlcNAc...) asparagine" evidence="4">
    <location>
        <position position="40"/>
    </location>
</feature>
<feature type="disulfide bond" evidence="2">
    <location>
        <begin position="97"/>
        <end position="109"/>
    </location>
</feature>
<feature type="disulfide bond" evidence="2">
    <location>
        <begin position="305"/>
        <end position="343"/>
    </location>
</feature>
<feature type="sequence variant" description="In strain: SS; in allele 2.4.">
    <original>I</original>
    <variation>L</variation>
    <location>
        <position position="53"/>
    </location>
</feature>
<feature type="sequence variant" description="In strain: SS; allele 2.4 and allele 2.8.">
    <original>L</original>
    <variation>H</variation>
    <location>
        <position position="61"/>
    </location>
</feature>
<feature type="sequence variant" description="In strain: SS; allele 2.4 and allele 2.8.">
    <original>S</original>
    <variation>T</variation>
    <location>
        <position position="128"/>
    </location>
</feature>
<sequence>MFLKNIFIALAIALLVDASPAKRSPGFVTLDFDVIKTPVNATGQEGKVKRQAIPVTLNNELVSYAADITIGSNKQKFNVIVDTGSSDLWVPDASVTCDKPRPGQSADFCKGKGIYTPKSSTTSQNLGSPFYIGYGDGSSSQGTLYKDTVGFGGASITKQVFADITKTSIPQGILGIGYKTNEAAGDYDNVPVTLKNQGVIAKNAYSLYLNSPNAATGQIIFGGVDKAKYSGSLIAVPVTSDRELRITLNSLKAVGKNINGNIDVLLDSGTTITYLQQDVAQDIIDAFQAELKSDGQGHTFYVTDCQTSGTVDFNFDNNAKISVPASEFTAPLSYANGQPYPKCQLLLGISDANILGDNFLRSAYLVYDLDDDKISLAQVKYTSASNIAALT</sequence>
<dbReference type="EC" id="3.4.23.24" evidence="18 23 25 26"/>
<dbReference type="EMBL" id="X56867">
    <property type="protein sequence ID" value="CAA40192.1"/>
    <property type="molecule type" value="Genomic_DNA"/>
</dbReference>
<dbReference type="EMBL" id="L12449">
    <property type="protein sequence ID" value="AAA34368.2"/>
    <property type="molecule type" value="Genomic_DNA"/>
</dbReference>
<dbReference type="EMBL" id="L12450">
    <property type="protein sequence ID" value="AAA34369.2"/>
    <property type="molecule type" value="Genomic_DNA"/>
</dbReference>
<dbReference type="SMR" id="P0CY26"/>
<dbReference type="ChEMBL" id="CHEMBL6022"/>
<dbReference type="MEROPS" id="A01.014"/>
<dbReference type="GlyCosmos" id="P0CY26">
    <property type="glycosylation" value="1 site, No reported glycans"/>
</dbReference>
<dbReference type="VEuPathDB" id="FungiDB:C6_03490C_A"/>
<dbReference type="VEuPathDB" id="FungiDB:CAWG_05021"/>
<dbReference type="PHI-base" id="PHI:68"/>
<dbReference type="GO" id="GO:0005576">
    <property type="term" value="C:extracellular region"/>
    <property type="evidence" value="ECO:0007669"/>
    <property type="project" value="UniProtKB-SubCell"/>
</dbReference>
<dbReference type="GO" id="GO:0004190">
    <property type="term" value="F:aspartic-type endopeptidase activity"/>
    <property type="evidence" value="ECO:0007669"/>
    <property type="project" value="UniProtKB-KW"/>
</dbReference>
<dbReference type="GO" id="GO:0046872">
    <property type="term" value="F:metal ion binding"/>
    <property type="evidence" value="ECO:0007669"/>
    <property type="project" value="UniProtKB-KW"/>
</dbReference>
<dbReference type="GO" id="GO:0006508">
    <property type="term" value="P:proteolysis"/>
    <property type="evidence" value="ECO:0007669"/>
    <property type="project" value="UniProtKB-KW"/>
</dbReference>
<dbReference type="CDD" id="cd05474">
    <property type="entry name" value="SAP_like"/>
    <property type="match status" value="1"/>
</dbReference>
<dbReference type="FunFam" id="2.40.70.10:FF:000011">
    <property type="entry name" value="Aspartic protease"/>
    <property type="match status" value="1"/>
</dbReference>
<dbReference type="FunFam" id="2.40.70.10:FF:000023">
    <property type="entry name" value="Aspartic protease"/>
    <property type="match status" value="1"/>
</dbReference>
<dbReference type="Gene3D" id="2.40.70.10">
    <property type="entry name" value="Acid Proteases"/>
    <property type="match status" value="2"/>
</dbReference>
<dbReference type="InterPro" id="IPR001461">
    <property type="entry name" value="Aspartic_peptidase_A1"/>
</dbReference>
<dbReference type="InterPro" id="IPR001969">
    <property type="entry name" value="Aspartic_peptidase_AS"/>
</dbReference>
<dbReference type="InterPro" id="IPR033121">
    <property type="entry name" value="PEPTIDASE_A1"/>
</dbReference>
<dbReference type="InterPro" id="IPR021109">
    <property type="entry name" value="Peptidase_aspartic_dom_sf"/>
</dbReference>
<dbReference type="InterPro" id="IPR033876">
    <property type="entry name" value="SAP-like"/>
</dbReference>
<dbReference type="PANTHER" id="PTHR47966:SF65">
    <property type="entry name" value="ASPARTIC-TYPE ENDOPEPTIDASE"/>
    <property type="match status" value="1"/>
</dbReference>
<dbReference type="PANTHER" id="PTHR47966">
    <property type="entry name" value="BETA-SITE APP-CLEAVING ENZYME, ISOFORM A-RELATED"/>
    <property type="match status" value="1"/>
</dbReference>
<dbReference type="Pfam" id="PF00026">
    <property type="entry name" value="Asp"/>
    <property type="match status" value="1"/>
</dbReference>
<dbReference type="PRINTS" id="PR00792">
    <property type="entry name" value="PEPSIN"/>
</dbReference>
<dbReference type="SUPFAM" id="SSF50630">
    <property type="entry name" value="Acid proteases"/>
    <property type="match status" value="1"/>
</dbReference>
<dbReference type="PROSITE" id="PS00141">
    <property type="entry name" value="ASP_PROTEASE"/>
    <property type="match status" value="2"/>
</dbReference>
<dbReference type="PROSITE" id="PS51767">
    <property type="entry name" value="PEPTIDASE_A1"/>
    <property type="match status" value="1"/>
</dbReference>
<evidence type="ECO:0000250" key="1">
    <source>
        <dbReference type="UniProtKB" id="P0CS83"/>
    </source>
</evidence>
<evidence type="ECO:0000250" key="2">
    <source>
        <dbReference type="UniProtKB" id="P0CY27"/>
    </source>
</evidence>
<evidence type="ECO:0000250" key="3">
    <source>
        <dbReference type="UniProtKB" id="P0CY29"/>
    </source>
</evidence>
<evidence type="ECO:0000255" key="4"/>
<evidence type="ECO:0000255" key="5">
    <source>
        <dbReference type="PROSITE-ProRule" id="PRU01103"/>
    </source>
</evidence>
<evidence type="ECO:0000255" key="6">
    <source>
        <dbReference type="PROSITE-ProRule" id="PRU10094"/>
    </source>
</evidence>
<evidence type="ECO:0000269" key="7">
    <source>
    </source>
</evidence>
<evidence type="ECO:0000269" key="8">
    <source>
    </source>
</evidence>
<evidence type="ECO:0000269" key="9">
    <source>
    </source>
</evidence>
<evidence type="ECO:0000269" key="10">
    <source>
    </source>
</evidence>
<evidence type="ECO:0000269" key="11">
    <source>
    </source>
</evidence>
<evidence type="ECO:0000269" key="12">
    <source>
    </source>
</evidence>
<evidence type="ECO:0000269" key="13">
    <source>
    </source>
</evidence>
<evidence type="ECO:0000269" key="14">
    <source>
    </source>
</evidence>
<evidence type="ECO:0000269" key="15">
    <source>
    </source>
</evidence>
<evidence type="ECO:0000269" key="16">
    <source>
    </source>
</evidence>
<evidence type="ECO:0000269" key="17">
    <source>
    </source>
</evidence>
<evidence type="ECO:0000269" key="18">
    <source>
    </source>
</evidence>
<evidence type="ECO:0000269" key="19">
    <source>
    </source>
</evidence>
<evidence type="ECO:0000269" key="20">
    <source>
    </source>
</evidence>
<evidence type="ECO:0000269" key="21">
    <source>
    </source>
</evidence>
<evidence type="ECO:0000269" key="22">
    <source>
    </source>
</evidence>
<evidence type="ECO:0000269" key="23">
    <source>
    </source>
</evidence>
<evidence type="ECO:0000269" key="24">
    <source>
    </source>
</evidence>
<evidence type="ECO:0000269" key="25">
    <source>
    </source>
</evidence>
<evidence type="ECO:0000269" key="26">
    <source>
    </source>
</evidence>
<evidence type="ECO:0000303" key="27">
    <source>
    </source>
</evidence>
<evidence type="ECO:0000303" key="28">
    <source>
    </source>
</evidence>
<evidence type="ECO:0000303" key="29">
    <source>
    </source>
</evidence>
<evidence type="ECO:0000303" key="30">
    <source>
    </source>
</evidence>
<evidence type="ECO:0000305" key="31"/>
<proteinExistence type="evidence at protein level"/>
<organism>
    <name type="scientific">Candida albicans</name>
    <name type="common">Yeast</name>
    <dbReference type="NCBI Taxonomy" id="5476"/>
    <lineage>
        <taxon>Eukaryota</taxon>
        <taxon>Fungi</taxon>
        <taxon>Dikarya</taxon>
        <taxon>Ascomycota</taxon>
        <taxon>Saccharomycotina</taxon>
        <taxon>Pichiomycetes</taxon>
        <taxon>Debaryomycetaceae</taxon>
        <taxon>Candida/Lodderomyces clade</taxon>
        <taxon>Candida</taxon>
    </lineage>
</organism>
<keyword id="KW-0064">Aspartyl protease</keyword>
<keyword id="KW-0165">Cleavage on pair of basic residues</keyword>
<keyword id="KW-0903">Direct protein sequencing</keyword>
<keyword id="KW-1015">Disulfide bond</keyword>
<keyword id="KW-0325">Glycoprotein</keyword>
<keyword id="KW-0378">Hydrolase</keyword>
<keyword id="KW-0479">Metal-binding</keyword>
<keyword id="KW-0645">Protease</keyword>
<keyword id="KW-0964">Secreted</keyword>
<keyword id="KW-0732">Signal</keyword>
<keyword id="KW-0843">Virulence</keyword>
<keyword id="KW-0862">Zinc</keyword>
<keyword id="KW-0865">Zymogen</keyword>
<protein>
    <recommendedName>
        <fullName evidence="29">Secreted aspartic protease 1</fullName>
        <shortName evidence="31">ACP 1</shortName>
        <shortName evidence="31">Aspartate protease 1</shortName>
        <ecNumber evidence="18 23 25 26">3.4.23.24</ecNumber>
    </recommendedName>
    <alternativeName>
        <fullName evidence="31">Candidapepsin-1</fullName>
    </alternativeName>
    <alternativeName>
        <fullName evidence="28">Pepsinogen-1</fullName>
    </alternativeName>
    <alternativeName>
        <fullName evidence="30">Pepsinogen-10</fullName>
    </alternativeName>
</protein>
<gene>
    <name evidence="29" type="primary">SAP1</name>
    <name evidence="28" type="synonym">PEP1</name>
    <name evidence="30" type="synonym">PEP10</name>
    <name evidence="27" type="synonym">PRA10</name>
</gene>